<protein>
    <recommendedName>
        <fullName>Cryptochrome-1</fullName>
    </recommendedName>
</protein>
<gene>
    <name evidence="2" type="primary">cry</name>
    <name type="ORF">CPIJ009455</name>
</gene>
<accession>B0WRR9</accession>
<comment type="function">
    <text evidence="1">Blue light-dependent regulator that is the input of the circadian feedback loop. Has no photolyase activity for cyclobutane pyrimidine dimers or 6-4 photoproducts. Regulation of expression by light suggests a role in photoreception for locomotor activity rhythms. Functions, together with per, as a transcriptional repressor required for the oscillation of peripheral circadian clocks and for the correct specification of clock cells. Genes directly activated by the transcription factors Clock (Clk) and cycle (cyc) are repressed by cry (By similarity).</text>
</comment>
<comment type="cofactor">
    <cofactor evidence="2">
        <name>FAD</name>
        <dbReference type="ChEBI" id="CHEBI:57692"/>
    </cofactor>
    <text evidence="2">Binds 1 FAD per subunit.</text>
</comment>
<comment type="subunit">
    <text evidence="2">Interacts with tim and per; promoted by light conditions.</text>
</comment>
<comment type="subcellular location">
    <subcellularLocation>
        <location evidence="2">Cytoplasm</location>
    </subcellularLocation>
    <subcellularLocation>
        <location evidence="2">Cytoplasm</location>
        <location evidence="2">Perinuclear region</location>
    </subcellularLocation>
    <subcellularLocation>
        <location evidence="2">Nucleus</location>
    </subcellularLocation>
    <text evidence="1">Nuclear translocation initiates after the perception of a light signal.</text>
</comment>
<comment type="domain">
    <text evidence="2">DNA photolyase domain is sufficient for light detection and phototransduction.</text>
</comment>
<comment type="domain">
    <text>FAD-binding region regulates cry stability, cry-tim interaction, and circadian photosensitivity.</text>
</comment>
<comment type="similarity">
    <text evidence="3">Belongs to the DNA photolyase class-1 family.</text>
</comment>
<reference evidence="4" key="1">
    <citation type="submission" date="2007-03" db="EMBL/GenBank/DDBJ databases">
        <title>Annotation of Culex pipiens quinquefasciatus.</title>
        <authorList>
            <consortium name="The Broad Institute Genome Sequencing Platform"/>
            <person name="Atkinson P.W."/>
            <person name="Hemingway J."/>
            <person name="Christensen B.M."/>
            <person name="Higgs S."/>
            <person name="Kodira C.D."/>
            <person name="Hannick L.I."/>
            <person name="Megy K."/>
            <person name="O'Leary S.B."/>
            <person name="Pearson M."/>
            <person name="Haas B.J."/>
            <person name="Mauceli E."/>
            <person name="Wortman J.R."/>
            <person name="Lee N.H."/>
            <person name="Guigo R."/>
            <person name="Stanke M."/>
            <person name="Alvarado L."/>
            <person name="Amedeo P."/>
            <person name="Antoine C.H."/>
            <person name="Arensburger P."/>
            <person name="Bidwell S.L."/>
            <person name="Crawford M."/>
            <person name="Camaro F."/>
            <person name="Devon K."/>
            <person name="Engels R."/>
            <person name="Hammond M."/>
            <person name="Howarth C."/>
            <person name="Koehrsen M."/>
            <person name="Lawson D."/>
            <person name="Montgomery P."/>
            <person name="Nene V."/>
            <person name="Nusbaum C."/>
            <person name="Puiu D."/>
            <person name="Romero-Severson J."/>
            <person name="Severson D.W."/>
            <person name="Shumway M."/>
            <person name="Sisk P."/>
            <person name="Stolte C."/>
            <person name="Zeng Q."/>
            <person name="Eisenstadt E."/>
            <person name="Fraser-Liggett C.M."/>
            <person name="Strausberg R."/>
            <person name="Galagan J."/>
            <person name="Birren B."/>
            <person name="Collins F.H."/>
        </authorList>
    </citation>
    <scope>NUCLEOTIDE SEQUENCE [LARGE SCALE GENOMIC DNA]</scope>
    <source>
        <strain evidence="4">JHB</strain>
    </source>
</reference>
<proteinExistence type="inferred from homology"/>
<feature type="chain" id="PRO_0000348596" description="Cryptochrome-1">
    <location>
        <begin position="1"/>
        <end position="499"/>
    </location>
</feature>
<feature type="binding site" evidence="1">
    <location>
        <position position="190"/>
    </location>
    <ligand>
        <name>FAD</name>
        <dbReference type="ChEBI" id="CHEBI:57692"/>
    </ligand>
</feature>
<feature type="binding site" evidence="1">
    <location>
        <position position="218"/>
    </location>
    <ligand>
        <name>FAD</name>
        <dbReference type="ChEBI" id="CHEBI:57692"/>
    </ligand>
</feature>
<feature type="binding site" evidence="1">
    <location>
        <position position="220"/>
    </location>
    <ligand>
        <name>FAD</name>
        <dbReference type="ChEBI" id="CHEBI:57692"/>
    </ligand>
</feature>
<feature type="binding site" evidence="1">
    <location>
        <position position="261"/>
    </location>
    <ligand>
        <name>FAD</name>
        <dbReference type="ChEBI" id="CHEBI:57692"/>
    </ligand>
</feature>
<feature type="binding site" evidence="1">
    <location>
        <position position="328"/>
    </location>
    <ligand>
        <name>FAD</name>
        <dbReference type="ChEBI" id="CHEBI:57692"/>
    </ligand>
</feature>
<feature type="binding site" evidence="1">
    <location>
        <begin position="360"/>
        <end position="362"/>
    </location>
    <ligand>
        <name>FAD</name>
        <dbReference type="ChEBI" id="CHEBI:57692"/>
    </ligand>
</feature>
<feature type="binding site" evidence="1">
    <location>
        <position position="366"/>
    </location>
    <ligand>
        <name>FAD</name>
        <dbReference type="ChEBI" id="CHEBI:57692"/>
    </ligand>
</feature>
<feature type="binding site" evidence="1">
    <location>
        <position position="369"/>
    </location>
    <ligand>
        <name>FAD</name>
        <dbReference type="ChEBI" id="CHEBI:57692"/>
    </ligand>
</feature>
<name>CRY1_CULQU</name>
<organism>
    <name type="scientific">Culex quinquefasciatus</name>
    <name type="common">Southern house mosquito</name>
    <name type="synonym">Culex pungens</name>
    <dbReference type="NCBI Taxonomy" id="7176"/>
    <lineage>
        <taxon>Eukaryota</taxon>
        <taxon>Metazoa</taxon>
        <taxon>Ecdysozoa</taxon>
        <taxon>Arthropoda</taxon>
        <taxon>Hexapoda</taxon>
        <taxon>Insecta</taxon>
        <taxon>Pterygota</taxon>
        <taxon>Neoptera</taxon>
        <taxon>Endopterygota</taxon>
        <taxon>Diptera</taxon>
        <taxon>Nematocera</taxon>
        <taxon>Culicoidea</taxon>
        <taxon>Culicidae</taxon>
        <taxon>Culicinae</taxon>
        <taxon>Culicini</taxon>
        <taxon>Culex</taxon>
        <taxon>Culex</taxon>
    </lineage>
</organism>
<evidence type="ECO:0000250" key="1"/>
<evidence type="ECO:0000250" key="2">
    <source>
        <dbReference type="UniProtKB" id="O77059"/>
    </source>
</evidence>
<evidence type="ECO:0000255" key="3"/>
<evidence type="ECO:0000312" key="4">
    <source>
        <dbReference type="EMBL" id="EDS33478.1"/>
    </source>
</evidence>
<sequence length="499" mass="56272">MTDKVRNRVQCWPALAQESSCVDFIPARQGATCGSTVVFIPCCGLTRGRRVLCQWFPCLSGGCCSQESSCVDFIPARQGATCGSTVVFIPCCGLTRGRRVLCQWFPCLSGGCCSQHTVNIIGEPPRPVGAPSFEFVEFGRLPSILSTELKLFQRAPVPEDFGIYYEGNADIARQRWTGGEAKALELLGRRLKQEEEAFREGYYLPTQARPDFLAPPSSMSAALRFGCLSVRMFYWCVHDLFARVQANNQLKHPGGHHITGQLIWREYFYTMSVHNPHYAVMELNPICLNIPWYEAKDDSLDRWKEGRTGFPLIDAAMRQLMAEGWLHHILRNITATFLTRGGLWISWEAGVQHFLKYLLDADWSVCAGNWMWVSSSAFEKLLDSSSCTSPVALARRLDPKGEYVKRYLPELEKFPALYVHEPWKAPPELQEQYGCVIGKDYPAPMVNLAEVNKCNANKMNAIRQKLLDQGGSTPAHCRPSDMDEVRQFFWLPEDVAAES</sequence>
<keyword id="KW-0090">Biological rhythms</keyword>
<keyword id="KW-0157">Chromophore</keyword>
<keyword id="KW-0963">Cytoplasm</keyword>
<keyword id="KW-0274">FAD</keyword>
<keyword id="KW-0285">Flavoprotein</keyword>
<keyword id="KW-0547">Nucleotide-binding</keyword>
<keyword id="KW-0539">Nucleus</keyword>
<keyword id="KW-0600">Photoreceptor protein</keyword>
<keyword id="KW-0675">Receptor</keyword>
<keyword id="KW-1185">Reference proteome</keyword>
<keyword id="KW-0678">Repressor</keyword>
<keyword id="KW-0716">Sensory transduction</keyword>
<keyword id="KW-0804">Transcription</keyword>
<keyword id="KW-0805">Transcription regulation</keyword>
<dbReference type="EMBL" id="DS232059">
    <property type="protein sequence ID" value="EDS33478.1"/>
    <property type="molecule type" value="Genomic_DNA"/>
</dbReference>
<dbReference type="RefSeq" id="XP_001851403.1">
    <property type="nucleotide sequence ID" value="XM_001851351.1"/>
</dbReference>
<dbReference type="SMR" id="B0WRR9"/>
<dbReference type="FunCoup" id="B0WRR9">
    <property type="interactions" value="18"/>
</dbReference>
<dbReference type="STRING" id="7176.B0WRR9"/>
<dbReference type="EnsemblMetazoa" id="CPIJ009455-RA">
    <property type="protein sequence ID" value="CPIJ009455-PA"/>
    <property type="gene ID" value="CPIJ009455"/>
</dbReference>
<dbReference type="EnsemblMetazoa" id="CQUJHB009977.R15405">
    <property type="protein sequence ID" value="CQUJHB009977.P15405"/>
    <property type="gene ID" value="CQUJHB009977"/>
</dbReference>
<dbReference type="EnsemblMetazoa" id="XM_038265885.1">
    <property type="protein sequence ID" value="XP_038121813.1"/>
    <property type="gene ID" value="LOC6042266"/>
</dbReference>
<dbReference type="KEGG" id="cqu:CpipJ_CPIJ009455"/>
<dbReference type="VEuPathDB" id="VectorBase:CPIJ009455"/>
<dbReference type="VEuPathDB" id="VectorBase:CQUJHB009977"/>
<dbReference type="eggNOG" id="KOG0133">
    <property type="taxonomic scope" value="Eukaryota"/>
</dbReference>
<dbReference type="HOGENOM" id="CLU_546603_0_0_1"/>
<dbReference type="InParanoid" id="B0WRR9"/>
<dbReference type="OMA" id="ESSCVDF"/>
<dbReference type="OrthoDB" id="435881at2759"/>
<dbReference type="PhylomeDB" id="B0WRR9"/>
<dbReference type="Proteomes" id="UP000002320">
    <property type="component" value="Unassembled WGS sequence"/>
</dbReference>
<dbReference type="GO" id="GO:0005737">
    <property type="term" value="C:cytoplasm"/>
    <property type="evidence" value="ECO:0000250"/>
    <property type="project" value="UniProtKB"/>
</dbReference>
<dbReference type="GO" id="GO:0005634">
    <property type="term" value="C:nucleus"/>
    <property type="evidence" value="ECO:0000250"/>
    <property type="project" value="UniProtKB"/>
</dbReference>
<dbReference type="GO" id="GO:0048471">
    <property type="term" value="C:perinuclear region of cytoplasm"/>
    <property type="evidence" value="ECO:0007669"/>
    <property type="project" value="UniProtKB-SubCell"/>
</dbReference>
<dbReference type="GO" id="GO:0009882">
    <property type="term" value="F:blue light photoreceptor activity"/>
    <property type="evidence" value="ECO:0000250"/>
    <property type="project" value="UniProtKB"/>
</dbReference>
<dbReference type="GO" id="GO:0003677">
    <property type="term" value="F:DNA binding"/>
    <property type="evidence" value="ECO:0007669"/>
    <property type="project" value="TreeGrafter"/>
</dbReference>
<dbReference type="GO" id="GO:0071949">
    <property type="term" value="F:FAD binding"/>
    <property type="evidence" value="ECO:0007669"/>
    <property type="project" value="TreeGrafter"/>
</dbReference>
<dbReference type="GO" id="GO:0050660">
    <property type="term" value="F:flavin adenine dinucleotide binding"/>
    <property type="evidence" value="ECO:0000250"/>
    <property type="project" value="UniProtKB"/>
</dbReference>
<dbReference type="GO" id="GO:0032922">
    <property type="term" value="P:circadian regulation of gene expression"/>
    <property type="evidence" value="ECO:0007669"/>
    <property type="project" value="TreeGrafter"/>
</dbReference>
<dbReference type="GO" id="GO:0043153">
    <property type="term" value="P:entrainment of circadian clock by photoperiod"/>
    <property type="evidence" value="ECO:0007669"/>
    <property type="project" value="TreeGrafter"/>
</dbReference>
<dbReference type="GO" id="GO:0045892">
    <property type="term" value="P:negative regulation of DNA-templated transcription"/>
    <property type="evidence" value="ECO:0000250"/>
    <property type="project" value="UniProtKB"/>
</dbReference>
<dbReference type="GO" id="GO:0006139">
    <property type="term" value="P:nucleobase-containing compound metabolic process"/>
    <property type="evidence" value="ECO:0007669"/>
    <property type="project" value="UniProtKB-ARBA"/>
</dbReference>
<dbReference type="GO" id="GO:0042752">
    <property type="term" value="P:regulation of circadian rhythm"/>
    <property type="evidence" value="ECO:0000250"/>
    <property type="project" value="UniProtKB"/>
</dbReference>
<dbReference type="GO" id="GO:0006950">
    <property type="term" value="P:response to stress"/>
    <property type="evidence" value="ECO:0007669"/>
    <property type="project" value="UniProtKB-ARBA"/>
</dbReference>
<dbReference type="Gene3D" id="1.25.40.80">
    <property type="match status" value="1"/>
</dbReference>
<dbReference type="Gene3D" id="1.10.579.10">
    <property type="entry name" value="DNA Cyclobutane Dipyrimidine Photolyase, subunit A, domain 3"/>
    <property type="match status" value="1"/>
</dbReference>
<dbReference type="InterPro" id="IPR036134">
    <property type="entry name" value="Crypto/Photolyase_FAD-like_sf"/>
</dbReference>
<dbReference type="InterPro" id="IPR005101">
    <property type="entry name" value="Cryptochr/Photolyase_FAD-bd"/>
</dbReference>
<dbReference type="InterPro" id="IPR002081">
    <property type="entry name" value="Cryptochrome/DNA_photolyase_1"/>
</dbReference>
<dbReference type="InterPro" id="IPR018394">
    <property type="entry name" value="DNA_photolyase_1_CS_C"/>
</dbReference>
<dbReference type="PANTHER" id="PTHR11455">
    <property type="entry name" value="CRYPTOCHROME"/>
    <property type="match status" value="1"/>
</dbReference>
<dbReference type="PANTHER" id="PTHR11455:SF17">
    <property type="entry name" value="CRYPTOCHROME-1"/>
    <property type="match status" value="1"/>
</dbReference>
<dbReference type="Pfam" id="PF03441">
    <property type="entry name" value="FAD_binding_7"/>
    <property type="match status" value="1"/>
</dbReference>
<dbReference type="PRINTS" id="PR00147">
    <property type="entry name" value="DNAPHOTLYASE"/>
</dbReference>
<dbReference type="SUPFAM" id="SSF48173">
    <property type="entry name" value="Cryptochrome/photolyase FAD-binding domain"/>
    <property type="match status" value="1"/>
</dbReference>
<dbReference type="PROSITE" id="PS00394">
    <property type="entry name" value="DNA_PHOTOLYASES_1_1"/>
    <property type="match status" value="1"/>
</dbReference>